<gene>
    <name evidence="1" type="primary">selU</name>
    <name type="ordered locus">Csal_0512</name>
</gene>
<proteinExistence type="inferred from homology"/>
<keyword id="KW-1185">Reference proteome</keyword>
<keyword id="KW-0711">Selenium</keyword>
<keyword id="KW-0808">Transferase</keyword>
<protein>
    <recommendedName>
        <fullName evidence="1">tRNA 2-selenouridine synthase</fullName>
        <ecNumber evidence="1">2.9.1.3</ecNumber>
    </recommendedName>
</protein>
<reference key="1">
    <citation type="journal article" date="2011" name="Stand. Genomic Sci.">
        <title>Complete genome sequence of the halophilic and highly halotolerant Chromohalobacter salexigens type strain (1H11(T)).</title>
        <authorList>
            <person name="Copeland A."/>
            <person name="O'Connor K."/>
            <person name="Lucas S."/>
            <person name="Lapidus A."/>
            <person name="Berry K.W."/>
            <person name="Detter J.C."/>
            <person name="Del Rio T.G."/>
            <person name="Hammon N."/>
            <person name="Dalin E."/>
            <person name="Tice H."/>
            <person name="Pitluck S."/>
            <person name="Bruce D."/>
            <person name="Goodwin L."/>
            <person name="Han C."/>
            <person name="Tapia R."/>
            <person name="Saunders E."/>
            <person name="Schmutz J."/>
            <person name="Brettin T."/>
            <person name="Larimer F."/>
            <person name="Land M."/>
            <person name="Hauser L."/>
            <person name="Vargas C."/>
            <person name="Nieto J.J."/>
            <person name="Kyrpides N.C."/>
            <person name="Ivanova N."/>
            <person name="Goker M."/>
            <person name="Klenk H.P."/>
            <person name="Csonka L.N."/>
            <person name="Woyke T."/>
        </authorList>
    </citation>
    <scope>NUCLEOTIDE SEQUENCE [LARGE SCALE GENOMIC DNA]</scope>
    <source>
        <strain>ATCC BAA-138 / DSM 3043 / CIP 106854 / NCIMB 13768 / 1H11</strain>
    </source>
</reference>
<name>SELU_CHRSD</name>
<feature type="chain" id="PRO_0000292696" description="tRNA 2-selenouridine synthase">
    <location>
        <begin position="1"/>
        <end position="361"/>
    </location>
</feature>
<feature type="domain" description="Rhodanese" evidence="1">
    <location>
        <begin position="11"/>
        <end position="134"/>
    </location>
</feature>
<feature type="active site" description="S-selanylcysteine intermediate" evidence="1">
    <location>
        <position position="94"/>
    </location>
</feature>
<dbReference type="EC" id="2.9.1.3" evidence="1"/>
<dbReference type="EMBL" id="CP000285">
    <property type="protein sequence ID" value="ABE57874.1"/>
    <property type="molecule type" value="Genomic_DNA"/>
</dbReference>
<dbReference type="RefSeq" id="WP_011505820.1">
    <property type="nucleotide sequence ID" value="NC_007963.1"/>
</dbReference>
<dbReference type="SMR" id="Q1R084"/>
<dbReference type="STRING" id="290398.Csal_0512"/>
<dbReference type="GeneID" id="95333266"/>
<dbReference type="KEGG" id="csa:Csal_0512"/>
<dbReference type="eggNOG" id="COG2603">
    <property type="taxonomic scope" value="Bacteria"/>
</dbReference>
<dbReference type="HOGENOM" id="CLU_043456_1_0_6"/>
<dbReference type="Proteomes" id="UP000000239">
    <property type="component" value="Chromosome"/>
</dbReference>
<dbReference type="GO" id="GO:0016765">
    <property type="term" value="F:transferase activity, transferring alkyl or aryl (other than methyl) groups"/>
    <property type="evidence" value="ECO:0007669"/>
    <property type="project" value="UniProtKB-UniRule"/>
</dbReference>
<dbReference type="GO" id="GO:0043828">
    <property type="term" value="F:tRNA 2-selenouridine synthase activity"/>
    <property type="evidence" value="ECO:0007669"/>
    <property type="project" value="UniProtKB-EC"/>
</dbReference>
<dbReference type="GO" id="GO:0002098">
    <property type="term" value="P:tRNA wobble uridine modification"/>
    <property type="evidence" value="ECO:0007669"/>
    <property type="project" value="UniProtKB-UniRule"/>
</dbReference>
<dbReference type="Gene3D" id="3.40.250.10">
    <property type="entry name" value="Rhodanese-like domain"/>
    <property type="match status" value="1"/>
</dbReference>
<dbReference type="HAMAP" id="MF_01622">
    <property type="entry name" value="tRNA_sel_U_synth"/>
    <property type="match status" value="1"/>
</dbReference>
<dbReference type="InterPro" id="IPR001763">
    <property type="entry name" value="Rhodanese-like_dom"/>
</dbReference>
<dbReference type="InterPro" id="IPR036873">
    <property type="entry name" value="Rhodanese-like_dom_sf"/>
</dbReference>
<dbReference type="InterPro" id="IPR017582">
    <property type="entry name" value="SelU"/>
</dbReference>
<dbReference type="NCBIfam" id="NF008751">
    <property type="entry name" value="PRK11784.1-3"/>
    <property type="match status" value="1"/>
</dbReference>
<dbReference type="NCBIfam" id="TIGR03167">
    <property type="entry name" value="tRNA_sel_U_synt"/>
    <property type="match status" value="1"/>
</dbReference>
<dbReference type="PANTHER" id="PTHR30401">
    <property type="entry name" value="TRNA 2-SELENOURIDINE SYNTHASE"/>
    <property type="match status" value="1"/>
</dbReference>
<dbReference type="PANTHER" id="PTHR30401:SF0">
    <property type="entry name" value="TRNA 2-SELENOURIDINE SYNTHASE"/>
    <property type="match status" value="1"/>
</dbReference>
<dbReference type="Pfam" id="PF00581">
    <property type="entry name" value="Rhodanese"/>
    <property type="match status" value="1"/>
</dbReference>
<dbReference type="SMART" id="SM00450">
    <property type="entry name" value="RHOD"/>
    <property type="match status" value="1"/>
</dbReference>
<dbReference type="SUPFAM" id="SSF52821">
    <property type="entry name" value="Rhodanese/Cell cycle control phosphatase"/>
    <property type="match status" value="1"/>
</dbReference>
<dbReference type="PROSITE" id="PS50206">
    <property type="entry name" value="RHODANESE_3"/>
    <property type="match status" value="1"/>
</dbReference>
<accession>Q1R084</accession>
<sequence length="361" mass="40850">MSLPHLAPEMALLERPLIDVRAPVEFARGALPGAVNLPLMDDAERHAVGIRYKEAGQGAAIALGERLVDGDLKARRVAAWRAFAERHPDAVIYCFRGGLRSRIAQQWLQEAGITLPRIQGGWKAMRQCVNAEIEAAAARPVLVVAGLTGCAKTELVQSLDVGIDLEGHARHKGSAFGRHPLQGPSQIDFEHALGAALSHATHGCVVEDESRMIGQLDIPLSFWQTMETAPRIRVEMPLDWRLEQIRKDYIDTLWRTYRDHYGEWLGWSLMRKQLSSALKRVRKRLGSARFQRLQRLQALAFREHQRGNTQAHEAWLAPLMLEYYDPMYRYQLEQSPYEALHVGDWESCLAFARDWSAALPR</sequence>
<evidence type="ECO:0000255" key="1">
    <source>
        <dbReference type="HAMAP-Rule" id="MF_01622"/>
    </source>
</evidence>
<comment type="function">
    <text evidence="1">Involved in the post-transcriptional modification of the uridine at the wobble position (U34) of tRNA(Lys), tRNA(Glu) and tRNA(Gln). Catalyzes the conversion of 2-thiouridine (S2U-RNA) to 2-selenouridine (Se2U-RNA). Acts in a two-step process involving geranylation of 2-thiouridine (S2U) to S-geranyl-2-thiouridine (geS2U) and subsequent selenation of the latter derivative to 2-selenouridine (Se2U) in the tRNA chain.</text>
</comment>
<comment type="catalytic activity">
    <reaction evidence="1">
        <text>5-methylaminomethyl-2-thiouridine(34) in tRNA + selenophosphate + (2E)-geranyl diphosphate + H2O + H(+) = 5-methylaminomethyl-2-selenouridine(34) in tRNA + (2E)-thiogeraniol + phosphate + diphosphate</text>
        <dbReference type="Rhea" id="RHEA:42716"/>
        <dbReference type="Rhea" id="RHEA-COMP:10195"/>
        <dbReference type="Rhea" id="RHEA-COMP:10196"/>
        <dbReference type="ChEBI" id="CHEBI:15377"/>
        <dbReference type="ChEBI" id="CHEBI:15378"/>
        <dbReference type="ChEBI" id="CHEBI:16144"/>
        <dbReference type="ChEBI" id="CHEBI:33019"/>
        <dbReference type="ChEBI" id="CHEBI:43474"/>
        <dbReference type="ChEBI" id="CHEBI:58057"/>
        <dbReference type="ChEBI" id="CHEBI:74455"/>
        <dbReference type="ChEBI" id="CHEBI:82743"/>
        <dbReference type="ChEBI" id="CHEBI:143703"/>
        <dbReference type="EC" id="2.9.1.3"/>
    </reaction>
    <physiologicalReaction direction="left-to-right" evidence="1">
        <dbReference type="Rhea" id="RHEA:42717"/>
    </physiologicalReaction>
</comment>
<comment type="catalytic activity">
    <reaction evidence="1">
        <text>5-methylaminomethyl-2-thiouridine(34) in tRNA + (2E)-geranyl diphosphate = 5-methylaminomethyl-S-(2E)-geranyl-thiouridine(34) in tRNA + diphosphate</text>
        <dbReference type="Rhea" id="RHEA:14085"/>
        <dbReference type="Rhea" id="RHEA-COMP:10195"/>
        <dbReference type="Rhea" id="RHEA-COMP:14654"/>
        <dbReference type="ChEBI" id="CHEBI:33019"/>
        <dbReference type="ChEBI" id="CHEBI:58057"/>
        <dbReference type="ChEBI" id="CHEBI:74455"/>
        <dbReference type="ChEBI" id="CHEBI:140632"/>
    </reaction>
    <physiologicalReaction direction="left-to-right" evidence="1">
        <dbReference type="Rhea" id="RHEA:14086"/>
    </physiologicalReaction>
</comment>
<comment type="catalytic activity">
    <reaction evidence="1">
        <text>5-methylaminomethyl-S-(2E)-geranyl-thiouridine(34) in tRNA + selenophosphate + H(+) = 5-methylaminomethyl-2-(Se-phospho)selenouridine(34) in tRNA + (2E)-thiogeraniol</text>
        <dbReference type="Rhea" id="RHEA:60172"/>
        <dbReference type="Rhea" id="RHEA-COMP:14654"/>
        <dbReference type="Rhea" id="RHEA-COMP:15523"/>
        <dbReference type="ChEBI" id="CHEBI:15378"/>
        <dbReference type="ChEBI" id="CHEBI:16144"/>
        <dbReference type="ChEBI" id="CHEBI:140632"/>
        <dbReference type="ChEBI" id="CHEBI:143702"/>
        <dbReference type="ChEBI" id="CHEBI:143703"/>
    </reaction>
    <physiologicalReaction direction="left-to-right" evidence="1">
        <dbReference type="Rhea" id="RHEA:60173"/>
    </physiologicalReaction>
</comment>
<comment type="catalytic activity">
    <reaction evidence="1">
        <text>5-methylaminomethyl-2-(Se-phospho)selenouridine(34) in tRNA + H2O = 5-methylaminomethyl-2-selenouridine(34) in tRNA + phosphate</text>
        <dbReference type="Rhea" id="RHEA:60176"/>
        <dbReference type="Rhea" id="RHEA-COMP:10196"/>
        <dbReference type="Rhea" id="RHEA-COMP:15523"/>
        <dbReference type="ChEBI" id="CHEBI:15377"/>
        <dbReference type="ChEBI" id="CHEBI:43474"/>
        <dbReference type="ChEBI" id="CHEBI:82743"/>
        <dbReference type="ChEBI" id="CHEBI:143702"/>
    </reaction>
    <physiologicalReaction direction="left-to-right" evidence="1">
        <dbReference type="Rhea" id="RHEA:60177"/>
    </physiologicalReaction>
</comment>
<comment type="subunit">
    <text evidence="1">Monomer.</text>
</comment>
<comment type="similarity">
    <text evidence="1">Belongs to the SelU family.</text>
</comment>
<organism>
    <name type="scientific">Chromohalobacter salexigens (strain ATCC BAA-138 / DSM 3043 / CIP 106854 / NCIMB 13768 / 1H11)</name>
    <dbReference type="NCBI Taxonomy" id="290398"/>
    <lineage>
        <taxon>Bacteria</taxon>
        <taxon>Pseudomonadati</taxon>
        <taxon>Pseudomonadota</taxon>
        <taxon>Gammaproteobacteria</taxon>
        <taxon>Oceanospirillales</taxon>
        <taxon>Halomonadaceae</taxon>
        <taxon>Chromohalobacter</taxon>
    </lineage>
</organism>